<comment type="function">
    <text evidence="1 2 7">Microtubule-dependent motor required for normal distribution of mitochondria and lysosomes. Can induce formation of neurite-like membrane protrusions in non-neuronal cells in a ZFYVE27-dependent manner (By similarity). Regulates centrosome and nuclear positioning during mitotic entry. During the G2 phase of the cell cycle in a BICD2-dependent manner, antagonizes dynein function and drives the separation of nuclei and centrosomes (By similarity). Required for anterograde axonal transportation of MAPK8IP3/JIP3 which is essential for MAPK8IP3/JIP3 function in axon elongation (PubMed:23576431). Through binding with PLEKHM2 and ARL8B, directs lysosome movement toward microtubule plus ends. Involved in NK cell-mediated cytotoxicity. Drives the polarization of cytolytic granules and microtubule-organizing centers (MTOCs) toward the immune synapse between effector NK lymphocytes and target cells (By similarity).</text>
</comment>
<comment type="subunit">
    <text evidence="1 2 6 8">Oligomer composed of two heavy chains and two light chains. Interacts with GRIP1 and PPP1R42 (By similarity). Interacts with SYBU. Interacts with JAKMIP1. Interacts with PLEKHM2. Interacts with ECPAS (By similarity). Interacts with ZFYVE27 (By similarity). Found in a complex with OGT, RHOT1, RHOT2 and TRAK1 (PubMed:24995978). Interacts with APP (via cytoplasmic domain) (PubMed:23011729).</text>
</comment>
<comment type="interaction">
    <interactant intactId="EBI-920191">
        <id>Q2PQA9</id>
    </interactant>
    <interactant intactId="EBI-1105048">
        <id>Q9UPV9</id>
        <label>TRAK1</label>
    </interactant>
    <organismsDiffer>true</organismsDiffer>
    <experiments>3</experiments>
</comment>
<comment type="subcellular location">
    <subcellularLocation>
        <location evidence="9">Cytoplasm</location>
        <location evidence="9">Cytoskeleton</location>
    </subcellularLocation>
    <subcellularLocation>
        <location evidence="1">Cytolytic granule membrane</location>
    </subcellularLocation>
    <subcellularLocation>
        <location evidence="1">Lysosome membrane</location>
        <topology evidence="1">Peripheral membrane protein</topology>
        <orientation evidence="1">Cytoplasmic side</orientation>
    </subcellularLocation>
    <text evidence="9">Uniformly distributed between soma and neurites in hippocampal neurons.</text>
</comment>
<comment type="tissue specificity">
    <text evidence="6 9">Expressed in the brain (at protein level) (PubMed:23011729). Expressed in the brain, liver, kidney, spleen, heart, lung and sciatic nerve (PubMed:7514426).</text>
</comment>
<comment type="developmental stage">
    <text evidence="9">Expressed in the brain in the newborn.</text>
</comment>
<comment type="domain">
    <text evidence="11">Composed of three structural domains: a large globular N-terminal domain which is responsible for the motor activity of kinesin (it hydrolyzes ATP and binds microtubule), a central alpha-helical coiled coil domain that mediates the heavy chain dimerization; and a small globular C-terminal domain which interacts with other proteins (such as the kinesin light chains), vesicles and membranous organelles.</text>
</comment>
<comment type="similarity">
    <text evidence="4">Belongs to the TRAFAC class myosin-kinesin ATPase superfamily. Kinesin family. Kinesin subfamily.</text>
</comment>
<organism>
    <name type="scientific">Rattus norvegicus</name>
    <name type="common">Rat</name>
    <dbReference type="NCBI Taxonomy" id="10116"/>
    <lineage>
        <taxon>Eukaryota</taxon>
        <taxon>Metazoa</taxon>
        <taxon>Chordata</taxon>
        <taxon>Craniata</taxon>
        <taxon>Vertebrata</taxon>
        <taxon>Euteleostomi</taxon>
        <taxon>Mammalia</taxon>
        <taxon>Eutheria</taxon>
        <taxon>Euarchontoglires</taxon>
        <taxon>Glires</taxon>
        <taxon>Rodentia</taxon>
        <taxon>Myomorpha</taxon>
        <taxon>Muroidea</taxon>
        <taxon>Muridae</taxon>
        <taxon>Murinae</taxon>
        <taxon>Rattus</taxon>
    </lineage>
</organism>
<protein>
    <recommendedName>
        <fullName>Kinesin-1 heavy chain</fullName>
    </recommendedName>
    <alternativeName>
        <fullName>Conventional kinesin heavy chain</fullName>
    </alternativeName>
    <alternativeName>
        <fullName>Ubiquitous kinesin heavy chain</fullName>
        <shortName>UKHC</shortName>
    </alternativeName>
</protein>
<sequence>MADPAECNIKVMCRFRPLNESEVNRGDKYVAKFQGEDTVMIASKPYAFDRVFQSSTSQEQVYNDCAKKIVKDVLEGYNGTIFAYGQTSSGKTHTMEGKLHDPEGMGIIPRIVQDIFNYIYSMDENLEFHIKVSYFEIYLDKIRDLLDVSKTNLSVHEDKNRVPYVKGCTERFVCSPDEVMDTIDEGKSNRHVAVTNMNEHSSRSHSIFLINVKQENTQTEQKLSGKLYLVDLAGSEKVSKTGAEGAVLDEAKNINKSLSALGNVISALAEGSTYVPYRDSKMTRILQDSLGGNCRTTIVICCSPSSYNESETKSTLLFGQRAKTIKNTVCVNVELTAEQWKKKYEKEKEKNKTLRNTIQWLENELNRWRNGETVPIDEQFDKEKANLEAFTADKDVAITNDKPAAAIGMAGSFTDAERRKCEEEIAKLYKQLDDKDEEINQQSQLVEKLKTQMLDQEELLASTRRDQDNMQAELNRLQAENDASKEEVKEVLQALEELAVNYDQKSQEVEDKTKEYELLSDELNQKSATLASIDAELQKLKEMTNHQKKRAAEMMASLLKDLAEIGIAVGNNDVKQPEGTGMIDEEFTVARLYISKMKSEVKTMVKRCKQLESTQTESNKKMEENEKELAACQLRISQHEAKIKSLTEYLQNVEQKKRQLEESVDSLGEELVQLRAQEKVHEMEKEHLNKVQTANEVKQAVEQQIQSHRETHQKQISSLRDEVEAKEKLITDLQDQNQKMVLEQERLRVEHERLKAVDQEKSRKLHELTVMQDRREQARQDLKGLEETVAKELQTLHNLRKLFVQDLATRVKKSAEVDSDDTGGSAAQKQKISFLENNLEQLTKVHKQLVRDNADLRCELPKLEKRLRATAERVKALESALKEAKENASRDRKRYQQEVDRIKEAVRSKNMARRGHSAQIAKPIRPGQHPAASPTHPGAVRGGGSFVQNNQPVGLRGGGGKQA</sequence>
<keyword id="KW-0002">3D-structure</keyword>
<keyword id="KW-0007">Acetylation</keyword>
<keyword id="KW-0067">ATP-binding</keyword>
<keyword id="KW-0175">Coiled coil</keyword>
<keyword id="KW-0963">Cytoplasm</keyword>
<keyword id="KW-0206">Cytoskeleton</keyword>
<keyword id="KW-1017">Isopeptide bond</keyword>
<keyword id="KW-0458">Lysosome</keyword>
<keyword id="KW-0472">Membrane</keyword>
<keyword id="KW-0488">Methylation</keyword>
<keyword id="KW-0493">Microtubule</keyword>
<keyword id="KW-0505">Motor protein</keyword>
<keyword id="KW-0547">Nucleotide-binding</keyword>
<keyword id="KW-0597">Phosphoprotein</keyword>
<keyword id="KW-1185">Reference proteome</keyword>
<keyword id="KW-0832">Ubl conjugation</keyword>
<name>KINH_RAT</name>
<feature type="initiator methionine" description="Removed" evidence="1">
    <location>
        <position position="1"/>
    </location>
</feature>
<feature type="chain" id="PRO_0000244485" description="Kinesin-1 heavy chain">
    <location>
        <begin position="2"/>
        <end position="963"/>
    </location>
</feature>
<feature type="domain" description="Kinesin motor" evidence="4">
    <location>
        <begin position="8"/>
        <end position="325"/>
    </location>
</feature>
<feature type="region of interest" description="Disordered" evidence="5">
    <location>
        <begin position="908"/>
        <end position="963"/>
    </location>
</feature>
<feature type="region of interest" description="Globular" evidence="3">
    <location>
        <begin position="915"/>
        <end position="963"/>
    </location>
</feature>
<feature type="coiled-coil region" evidence="3">
    <location>
        <begin position="330"/>
        <end position="913"/>
    </location>
</feature>
<feature type="binding site" evidence="4">
    <location>
        <begin position="85"/>
        <end position="92"/>
    </location>
    <ligand>
        <name>ATP</name>
        <dbReference type="ChEBI" id="CHEBI:30616"/>
    </ligand>
</feature>
<feature type="modified residue" description="N-acetylalanine" evidence="1">
    <location>
        <position position="2"/>
    </location>
</feature>
<feature type="modified residue" description="Phosphoserine" evidence="14">
    <location>
        <position position="933"/>
    </location>
</feature>
<feature type="modified residue" description="Phosphoserine" evidence="2">
    <location>
        <position position="945"/>
    </location>
</feature>
<feature type="modified residue" description="Omega-N-methylarginine" evidence="1">
    <location>
        <position position="956"/>
    </location>
</feature>
<feature type="cross-link" description="Glycyl lysine isopeptide (Lys-Gly) (interchain with G-Cter in SUMO2)" evidence="1">
    <location>
        <position position="213"/>
    </location>
</feature>
<evidence type="ECO:0000250" key="1">
    <source>
        <dbReference type="UniProtKB" id="P33176"/>
    </source>
</evidence>
<evidence type="ECO:0000250" key="2">
    <source>
        <dbReference type="UniProtKB" id="Q61768"/>
    </source>
</evidence>
<evidence type="ECO:0000255" key="3"/>
<evidence type="ECO:0000255" key="4">
    <source>
        <dbReference type="PROSITE-ProRule" id="PRU00283"/>
    </source>
</evidence>
<evidence type="ECO:0000256" key="5">
    <source>
        <dbReference type="SAM" id="MobiDB-lite"/>
    </source>
</evidence>
<evidence type="ECO:0000269" key="6">
    <source>
    </source>
</evidence>
<evidence type="ECO:0000269" key="7">
    <source>
    </source>
</evidence>
<evidence type="ECO:0000269" key="8">
    <source>
    </source>
</evidence>
<evidence type="ECO:0000269" key="9">
    <source>
    </source>
</evidence>
<evidence type="ECO:0000303" key="10">
    <source>
    </source>
</evidence>
<evidence type="ECO:0000305" key="11"/>
<evidence type="ECO:0000312" key="12">
    <source>
        <dbReference type="EMBL" id="AAD39239.1"/>
    </source>
</evidence>
<evidence type="ECO:0000312" key="13">
    <source>
        <dbReference type="EMBL" id="ABC25059.1"/>
    </source>
</evidence>
<evidence type="ECO:0007744" key="14">
    <source>
    </source>
</evidence>
<reference evidence="11 13" key="1">
    <citation type="submission" date="2005-11" db="EMBL/GenBank/DDBJ databases">
        <title>Sequencing of rat KIF5B from rat testis cDNA library.</title>
        <authorList>
            <person name="Allan V.J."/>
            <person name="McKenzie E.A."/>
            <person name="Wozniak M.J."/>
        </authorList>
    </citation>
    <scope>NUCLEOTIDE SEQUENCE [MRNA]</scope>
    <source>
        <tissue>Testis</tissue>
    </source>
</reference>
<reference evidence="11 12" key="2">
    <citation type="journal article" date="1999" name="Biol. Bull.">
        <title>Messenger RNAs for kinesins and dynein are located in neural processes.</title>
        <authorList>
            <person name="Gould R."/>
            <person name="Freund C."/>
            <person name="Palmer F."/>
            <person name="Knapp P.E."/>
            <person name="Huang J."/>
            <person name="Morrison H."/>
            <person name="Feinstein D.L."/>
        </authorList>
    </citation>
    <scope>NUCLEOTIDE SEQUENCE [MRNA] OF 551-803</scope>
    <source>
        <tissue evidence="12">Brain</tissue>
    </source>
</reference>
<reference evidence="11" key="3">
    <citation type="journal article" date="1994" name="Neuron">
        <title>Cloning and localization of a conventional kinesin motor expressed exclusively in neurons.</title>
        <authorList>
            <person name="Niclas J."/>
            <person name="Navone F."/>
            <person name="Hom-Booher N."/>
            <person name="Vale R.D."/>
        </authorList>
    </citation>
    <scope>SUBCELLULAR LOCATION</scope>
    <scope>TISSUE SPECIFICITY</scope>
    <scope>DEVELOPMENTAL STAGE</scope>
</reference>
<reference key="4">
    <citation type="journal article" date="2012" name="Nat. Commun.">
        <title>Quantitative maps of protein phosphorylation sites across 14 different rat organs and tissues.</title>
        <authorList>
            <person name="Lundby A."/>
            <person name="Secher A."/>
            <person name="Lage K."/>
            <person name="Nordsborg N.B."/>
            <person name="Dmytriyev A."/>
            <person name="Lundby C."/>
            <person name="Olsen J.V."/>
        </authorList>
    </citation>
    <scope>PHOSPHORYLATION [LARGE SCALE ANALYSIS] AT SER-933</scope>
    <scope>IDENTIFICATION BY MASS SPECTROMETRY [LARGE SCALE ANALYSIS]</scope>
</reference>
<reference key="5">
    <citation type="journal article" date="2012" name="Phys. Biol.">
        <title>Quantitative measurements and modeling of cargo-motor interactions during fast transport in the living axon.</title>
        <authorList>
            <person name="Seamster P.E."/>
            <person name="Loewenberg M."/>
            <person name="Pascal J."/>
            <person name="Chauviere A."/>
            <person name="Gonzales A."/>
            <person name="Cristini V."/>
            <person name="Bearer E.L."/>
        </authorList>
    </citation>
    <scope>INTERACTION WITH APP</scope>
    <scope>TISSUE SPECIFICITY</scope>
</reference>
<reference key="6">
    <citation type="journal article" date="2013" name="J. Biol. Chem.">
        <title>c-Jun NH2-terminal kinase (JNK)-interacting protein-3 (JIP3) regulates neuronal axon elongation in a kinesin- and JNK-dependent manner.</title>
        <authorList>
            <person name="Sun T."/>
            <person name="Yu N."/>
            <person name="Zhai L.K."/>
            <person name="Li N."/>
            <person name="Zhang C."/>
            <person name="Zhou L."/>
            <person name="Huang Z."/>
            <person name="Jiang X.Y."/>
            <person name="Shen Y."/>
            <person name="Chen Z.Y."/>
        </authorList>
    </citation>
    <scope>FUNCTION</scope>
</reference>
<reference key="7">
    <citation type="journal article" date="2014" name="Cell">
        <title>Glucose regulates mitochondrial motility via Milton modification by O-GlcNAc transferase.</title>
        <authorList>
            <person name="Pekkurnaz G."/>
            <person name="Trinidad J.C."/>
            <person name="Wang X."/>
            <person name="Kong D."/>
            <person name="Schwarz T.L."/>
        </authorList>
    </citation>
    <scope>INTERACTION WITH OGT; RHOT1; RHOT2 AND TRAK1</scope>
</reference>
<accession>Q2PQA9</accession>
<accession>Q9WV65</accession>
<gene>
    <name evidence="13" type="primary">Kif5b</name>
    <name evidence="10" type="synonym">Khc</name>
</gene>
<proteinExistence type="evidence at protein level"/>
<dbReference type="EMBL" id="DQ309275">
    <property type="protein sequence ID" value="ABC25059.1"/>
    <property type="molecule type" value="mRNA"/>
</dbReference>
<dbReference type="EMBL" id="AF155822">
    <property type="protein sequence ID" value="AAD39239.1"/>
    <property type="molecule type" value="mRNA"/>
</dbReference>
<dbReference type="RefSeq" id="NP_476550.1">
    <property type="nucleotide sequence ID" value="NM_057202.2"/>
</dbReference>
<dbReference type="RefSeq" id="XP_006254067.1">
    <property type="nucleotide sequence ID" value="XM_006254005.1"/>
</dbReference>
<dbReference type="PDB" id="4ATX">
    <property type="method" value="EM"/>
    <property type="resolution" value="8.20 A"/>
    <property type="chains" value="C=1-340"/>
</dbReference>
<dbReference type="PDBsum" id="4ATX"/>
<dbReference type="SMR" id="Q2PQA9"/>
<dbReference type="BioGRID" id="250763">
    <property type="interactions" value="5"/>
</dbReference>
<dbReference type="CORUM" id="Q2PQA9"/>
<dbReference type="DIP" id="DIP-37054N"/>
<dbReference type="FunCoup" id="Q2PQA9">
    <property type="interactions" value="3548"/>
</dbReference>
<dbReference type="IntAct" id="Q2PQA9">
    <property type="interactions" value="11"/>
</dbReference>
<dbReference type="MINT" id="Q2PQA9"/>
<dbReference type="STRING" id="10116.ENSRNOP00000023860"/>
<dbReference type="iPTMnet" id="Q2PQA9"/>
<dbReference type="PhosphoSitePlus" id="Q2PQA9"/>
<dbReference type="SwissPalm" id="Q2PQA9"/>
<dbReference type="jPOST" id="Q2PQA9"/>
<dbReference type="PaxDb" id="10116-ENSRNOP00000023860"/>
<dbReference type="GeneID" id="117550"/>
<dbReference type="KEGG" id="rno:117550"/>
<dbReference type="UCSC" id="RGD:621559">
    <property type="organism name" value="rat"/>
</dbReference>
<dbReference type="AGR" id="RGD:621559"/>
<dbReference type="CTD" id="3799"/>
<dbReference type="RGD" id="621559">
    <property type="gene designation" value="Kif5b"/>
</dbReference>
<dbReference type="VEuPathDB" id="HostDB:ENSRNOG00000017466"/>
<dbReference type="eggNOG" id="KOG0240">
    <property type="taxonomic scope" value="Eukaryota"/>
</dbReference>
<dbReference type="HOGENOM" id="CLU_001485_11_1_1"/>
<dbReference type="InParanoid" id="Q2PQA9"/>
<dbReference type="OrthoDB" id="36380at9989"/>
<dbReference type="PhylomeDB" id="Q2PQA9"/>
<dbReference type="TreeFam" id="TF105225"/>
<dbReference type="Reactome" id="R-RNO-2132295">
    <property type="pathway name" value="MHC class II antigen presentation"/>
</dbReference>
<dbReference type="Reactome" id="R-RNO-5625970">
    <property type="pathway name" value="RHO GTPases activate KTN1"/>
</dbReference>
<dbReference type="Reactome" id="R-RNO-6811434">
    <property type="pathway name" value="COPI-dependent Golgi-to-ER retrograde traffic"/>
</dbReference>
<dbReference type="Reactome" id="R-RNO-983189">
    <property type="pathway name" value="Kinesins"/>
</dbReference>
<dbReference type="EvolutionaryTrace" id="Q2PQA9"/>
<dbReference type="PRO" id="PR:Q2PQA9"/>
<dbReference type="Proteomes" id="UP000002494">
    <property type="component" value="Chromosome 17"/>
</dbReference>
<dbReference type="Bgee" id="ENSRNOG00000017466">
    <property type="expression patterns" value="Expressed in heart and 18 other cell types or tissues"/>
</dbReference>
<dbReference type="GO" id="GO:1904115">
    <property type="term" value="C:axon cytoplasm"/>
    <property type="evidence" value="ECO:0007669"/>
    <property type="project" value="GOC"/>
</dbReference>
<dbReference type="GO" id="GO:0044295">
    <property type="term" value="C:axonal growth cone"/>
    <property type="evidence" value="ECO:0000314"/>
    <property type="project" value="RGD"/>
</dbReference>
<dbReference type="GO" id="GO:0035253">
    <property type="term" value="C:ciliary rootlet"/>
    <property type="evidence" value="ECO:0000266"/>
    <property type="project" value="RGD"/>
</dbReference>
<dbReference type="GO" id="GO:0101004">
    <property type="term" value="C:cytolytic granule membrane"/>
    <property type="evidence" value="ECO:0007669"/>
    <property type="project" value="UniProtKB-SubCell"/>
</dbReference>
<dbReference type="GO" id="GO:0005737">
    <property type="term" value="C:cytoplasm"/>
    <property type="evidence" value="ECO:0000266"/>
    <property type="project" value="RGD"/>
</dbReference>
<dbReference type="GO" id="GO:0032839">
    <property type="term" value="C:dendrite cytoplasm"/>
    <property type="evidence" value="ECO:0007669"/>
    <property type="project" value="GOC"/>
</dbReference>
<dbReference type="GO" id="GO:0030139">
    <property type="term" value="C:endocytic vesicle"/>
    <property type="evidence" value="ECO:0000266"/>
    <property type="project" value="RGD"/>
</dbReference>
<dbReference type="GO" id="GO:0005871">
    <property type="term" value="C:kinesin complex"/>
    <property type="evidence" value="ECO:0000318"/>
    <property type="project" value="GO_Central"/>
</dbReference>
<dbReference type="GO" id="GO:0005874">
    <property type="term" value="C:microtubule"/>
    <property type="evidence" value="ECO:0000318"/>
    <property type="project" value="GO_Central"/>
</dbReference>
<dbReference type="GO" id="GO:0015630">
    <property type="term" value="C:microtubule cytoskeleton"/>
    <property type="evidence" value="ECO:0000314"/>
    <property type="project" value="CAFA"/>
</dbReference>
<dbReference type="GO" id="GO:0005739">
    <property type="term" value="C:mitochondrion"/>
    <property type="evidence" value="ECO:0000266"/>
    <property type="project" value="RGD"/>
</dbReference>
<dbReference type="GO" id="GO:0043005">
    <property type="term" value="C:neuron projection"/>
    <property type="evidence" value="ECO:0000266"/>
    <property type="project" value="RGD"/>
</dbReference>
<dbReference type="GO" id="GO:0048471">
    <property type="term" value="C:perinuclear region of cytoplasm"/>
    <property type="evidence" value="ECO:0000314"/>
    <property type="project" value="HGNC-UCL"/>
</dbReference>
<dbReference type="GO" id="GO:0045335">
    <property type="term" value="C:phagocytic vesicle"/>
    <property type="evidence" value="ECO:0000266"/>
    <property type="project" value="RGD"/>
</dbReference>
<dbReference type="GO" id="GO:0099524">
    <property type="term" value="C:postsynaptic cytosol"/>
    <property type="evidence" value="ECO:0000314"/>
    <property type="project" value="SynGO"/>
</dbReference>
<dbReference type="GO" id="GO:0031982">
    <property type="term" value="C:vesicle"/>
    <property type="evidence" value="ECO:0000250"/>
    <property type="project" value="UniProtKB"/>
</dbReference>
<dbReference type="GO" id="GO:0005524">
    <property type="term" value="F:ATP binding"/>
    <property type="evidence" value="ECO:0007669"/>
    <property type="project" value="UniProtKB-KW"/>
</dbReference>
<dbReference type="GO" id="GO:0016887">
    <property type="term" value="F:ATP hydrolysis activity"/>
    <property type="evidence" value="ECO:0000318"/>
    <property type="project" value="GO_Central"/>
</dbReference>
<dbReference type="GO" id="GO:0042802">
    <property type="term" value="F:identical protein binding"/>
    <property type="evidence" value="ECO:0000266"/>
    <property type="project" value="RGD"/>
</dbReference>
<dbReference type="GO" id="GO:0008432">
    <property type="term" value="F:JUN kinase binding"/>
    <property type="evidence" value="ECO:0000353"/>
    <property type="project" value="RGD"/>
</dbReference>
<dbReference type="GO" id="GO:0008017">
    <property type="term" value="F:microtubule binding"/>
    <property type="evidence" value="ECO:0000314"/>
    <property type="project" value="HGNC-UCL"/>
</dbReference>
<dbReference type="GO" id="GO:0099609">
    <property type="term" value="F:microtubule lateral binding"/>
    <property type="evidence" value="ECO:0000315"/>
    <property type="project" value="CAFA"/>
</dbReference>
<dbReference type="GO" id="GO:0003777">
    <property type="term" value="F:microtubule motor activity"/>
    <property type="evidence" value="ECO:0000314"/>
    <property type="project" value="HGNC-UCL"/>
</dbReference>
<dbReference type="GO" id="GO:0008574">
    <property type="term" value="F:plus-end-directed microtubule motor activity"/>
    <property type="evidence" value="ECO:0000318"/>
    <property type="project" value="GO_Central"/>
</dbReference>
<dbReference type="GO" id="GO:0044877">
    <property type="term" value="F:protein-containing complex binding"/>
    <property type="evidence" value="ECO:0000266"/>
    <property type="project" value="RGD"/>
</dbReference>
<dbReference type="GO" id="GO:0099641">
    <property type="term" value="P:anterograde axonal protein transport"/>
    <property type="evidence" value="ECO:0000315"/>
    <property type="project" value="UniProtKB"/>
</dbReference>
<dbReference type="GO" id="GO:0098971">
    <property type="term" value="P:anterograde dendritic transport of neurotransmitter receptor complex"/>
    <property type="evidence" value="ECO:0000318"/>
    <property type="project" value="GO_Central"/>
</dbReference>
<dbReference type="GO" id="GO:0007411">
    <property type="term" value="P:axon guidance"/>
    <property type="evidence" value="ECO:0000318"/>
    <property type="project" value="GO_Central"/>
</dbReference>
<dbReference type="GO" id="GO:0071346">
    <property type="term" value="P:cellular response to type II interferon"/>
    <property type="evidence" value="ECO:0000266"/>
    <property type="project" value="RGD"/>
</dbReference>
<dbReference type="GO" id="GO:0051642">
    <property type="term" value="P:centrosome localization"/>
    <property type="evidence" value="ECO:0000250"/>
    <property type="project" value="UniProtKB"/>
</dbReference>
<dbReference type="GO" id="GO:0007028">
    <property type="term" value="P:cytoplasm organization"/>
    <property type="evidence" value="ECO:0000266"/>
    <property type="project" value="RGD"/>
</dbReference>
<dbReference type="GO" id="GO:0021766">
    <property type="term" value="P:hippocampus development"/>
    <property type="evidence" value="ECO:0000270"/>
    <property type="project" value="RGD"/>
</dbReference>
<dbReference type="GO" id="GO:0032418">
    <property type="term" value="P:lysosome localization"/>
    <property type="evidence" value="ECO:0000250"/>
    <property type="project" value="UniProtKB"/>
</dbReference>
<dbReference type="GO" id="GO:0047497">
    <property type="term" value="P:mitochondrion transport along microtubule"/>
    <property type="evidence" value="ECO:0000266"/>
    <property type="project" value="RGD"/>
</dbReference>
<dbReference type="GO" id="GO:0160040">
    <property type="term" value="P:mitocytosis"/>
    <property type="evidence" value="ECO:0000266"/>
    <property type="project" value="RGD"/>
</dbReference>
<dbReference type="GO" id="GO:0042267">
    <property type="term" value="P:natural killer cell mediated cytotoxicity"/>
    <property type="evidence" value="ECO:0000250"/>
    <property type="project" value="UniProtKB"/>
</dbReference>
<dbReference type="GO" id="GO:0072383">
    <property type="term" value="P:plus-end-directed vesicle transport along microtubule"/>
    <property type="evidence" value="ECO:0000266"/>
    <property type="project" value="RGD"/>
</dbReference>
<dbReference type="GO" id="GO:0035774">
    <property type="term" value="P:positive regulation of insulin secretion involved in cellular response to glucose stimulus"/>
    <property type="evidence" value="ECO:0000315"/>
    <property type="project" value="RGD"/>
</dbReference>
<dbReference type="GO" id="GO:0090316">
    <property type="term" value="P:positive regulation of intracellular protein transport"/>
    <property type="evidence" value="ECO:0000315"/>
    <property type="project" value="RGD"/>
</dbReference>
<dbReference type="GO" id="GO:0043268">
    <property type="term" value="P:positive regulation of potassium ion transport"/>
    <property type="evidence" value="ECO:0000266"/>
    <property type="project" value="RGD"/>
</dbReference>
<dbReference type="GO" id="GO:1903078">
    <property type="term" value="P:positive regulation of protein localization to plasma membrane"/>
    <property type="evidence" value="ECO:0000266"/>
    <property type="project" value="RGD"/>
</dbReference>
<dbReference type="GO" id="GO:0032230">
    <property type="term" value="P:positive regulation of synaptic transmission, GABAergic"/>
    <property type="evidence" value="ECO:0000266"/>
    <property type="project" value="RGD"/>
</dbReference>
<dbReference type="GO" id="GO:0031340">
    <property type="term" value="P:positive regulation of vesicle fusion"/>
    <property type="evidence" value="ECO:0000315"/>
    <property type="project" value="RGD"/>
</dbReference>
<dbReference type="GO" id="GO:0042391">
    <property type="term" value="P:regulation of membrane potential"/>
    <property type="evidence" value="ECO:0000266"/>
    <property type="project" value="RGD"/>
</dbReference>
<dbReference type="GO" id="GO:0098987">
    <property type="term" value="P:regulation of modification of synapse structure, modulating synaptic transmission"/>
    <property type="evidence" value="ECO:0000266"/>
    <property type="project" value="RGD"/>
</dbReference>
<dbReference type="GO" id="GO:1990049">
    <property type="term" value="P:retrograde neuronal dense core vesicle transport"/>
    <property type="evidence" value="ECO:0000316"/>
    <property type="project" value="ARUK-UCL"/>
</dbReference>
<dbReference type="GO" id="GO:0035617">
    <property type="term" value="P:stress granule disassembly"/>
    <property type="evidence" value="ECO:0000266"/>
    <property type="project" value="RGD"/>
</dbReference>
<dbReference type="GO" id="GO:0048489">
    <property type="term" value="P:synaptic vesicle transport"/>
    <property type="evidence" value="ECO:0000318"/>
    <property type="project" value="GO_Central"/>
</dbReference>
<dbReference type="GO" id="GO:0047496">
    <property type="term" value="P:vesicle transport along microtubule"/>
    <property type="evidence" value="ECO:0000314"/>
    <property type="project" value="HGNC-UCL"/>
</dbReference>
<dbReference type="CDD" id="cd23649">
    <property type="entry name" value="Khc_CBD_cc"/>
    <property type="match status" value="1"/>
</dbReference>
<dbReference type="CDD" id="cd01369">
    <property type="entry name" value="KISc_KHC_KIF5"/>
    <property type="match status" value="1"/>
</dbReference>
<dbReference type="FunFam" id="3.40.850.10:FF:000009">
    <property type="entry name" value="Kinesin-like protein"/>
    <property type="match status" value="1"/>
</dbReference>
<dbReference type="Gene3D" id="6.10.250.1590">
    <property type="match status" value="1"/>
</dbReference>
<dbReference type="Gene3D" id="3.40.850.10">
    <property type="entry name" value="Kinesin motor domain"/>
    <property type="match status" value="1"/>
</dbReference>
<dbReference type="InterPro" id="IPR027640">
    <property type="entry name" value="Kinesin-like_fam"/>
</dbReference>
<dbReference type="InterPro" id="IPR019821">
    <property type="entry name" value="Kinesin_motor_CS"/>
</dbReference>
<dbReference type="InterPro" id="IPR001752">
    <property type="entry name" value="Kinesin_motor_dom"/>
</dbReference>
<dbReference type="InterPro" id="IPR036961">
    <property type="entry name" value="Kinesin_motor_dom_sf"/>
</dbReference>
<dbReference type="InterPro" id="IPR027417">
    <property type="entry name" value="P-loop_NTPase"/>
</dbReference>
<dbReference type="PANTHER" id="PTHR47968">
    <property type="entry name" value="CENTROMERE PROTEIN E"/>
    <property type="match status" value="1"/>
</dbReference>
<dbReference type="PANTHER" id="PTHR47968:SF68">
    <property type="entry name" value="KINESIN-LIKE PROTEIN"/>
    <property type="match status" value="1"/>
</dbReference>
<dbReference type="Pfam" id="PF00225">
    <property type="entry name" value="Kinesin"/>
    <property type="match status" value="1"/>
</dbReference>
<dbReference type="PRINTS" id="PR00380">
    <property type="entry name" value="KINESINHEAVY"/>
</dbReference>
<dbReference type="SMART" id="SM00129">
    <property type="entry name" value="KISc"/>
    <property type="match status" value="1"/>
</dbReference>
<dbReference type="SUPFAM" id="SSF52540">
    <property type="entry name" value="P-loop containing nucleoside triphosphate hydrolases"/>
    <property type="match status" value="1"/>
</dbReference>
<dbReference type="PROSITE" id="PS00411">
    <property type="entry name" value="KINESIN_MOTOR_1"/>
    <property type="match status" value="1"/>
</dbReference>
<dbReference type="PROSITE" id="PS50067">
    <property type="entry name" value="KINESIN_MOTOR_2"/>
    <property type="match status" value="1"/>
</dbReference>